<sequence length="360" mass="41793">MENQDTEQSQKRSGSEVEKDDFKRQKVVVPEGMTKREYKRQLKQQRWEETKDEYKQKKREKKKAARERRKERIKEAEANGETNEELYNYHQMKRAKVAPQEQIDTDVKIIMDCEFDSLMNDKEIVSLSNQITRSYSAKKHSTYDVQLDITSFNKNLKKRFEKAIPQYDKWTNVTFVENDKLEDILPMDDKQALSKYVYLTADTDEVIDTLEPHHTYIIGGIVDKNRYKNLCLNKAQSLGLKIGRLPIDKFIKMNGRQVLATSHVFELCCKWFENDKDWGKAFNEVLPPRKVKGKLTHGSDPEKSIEPSEVSEQPVSSEQSEQPVLSEQPVSSEQPVLSEQPVLSESSDEPSDEPSKGADH</sequence>
<gene>
    <name evidence="2" type="primary">TRM10</name>
    <name type="ordered locus">DEHA2B11572g</name>
</gene>
<dbReference type="EC" id="2.1.1.221" evidence="2"/>
<dbReference type="EMBL" id="CR382134">
    <property type="protein sequence ID" value="CAG85460.2"/>
    <property type="status" value="ALT_INIT"/>
    <property type="molecule type" value="Genomic_DNA"/>
</dbReference>
<dbReference type="RefSeq" id="XP_457456.2">
    <property type="nucleotide sequence ID" value="XM_457456.2"/>
</dbReference>
<dbReference type="SMR" id="Q6BWG3"/>
<dbReference type="FunCoup" id="Q6BWG3">
    <property type="interactions" value="803"/>
</dbReference>
<dbReference type="STRING" id="284592.Q6BWG3"/>
<dbReference type="GeneID" id="2913391"/>
<dbReference type="KEGG" id="dha:DEHA2B11572g"/>
<dbReference type="eggNOG" id="KOG2967">
    <property type="taxonomic scope" value="Eukaryota"/>
</dbReference>
<dbReference type="HOGENOM" id="CLU_034384_1_0_1"/>
<dbReference type="InParanoid" id="Q6BWG3"/>
<dbReference type="OrthoDB" id="278300at2759"/>
<dbReference type="Proteomes" id="UP000000599">
    <property type="component" value="Chromosome B"/>
</dbReference>
<dbReference type="GO" id="GO:0005737">
    <property type="term" value="C:cytoplasm"/>
    <property type="evidence" value="ECO:0007669"/>
    <property type="project" value="UniProtKB-SubCell"/>
</dbReference>
<dbReference type="GO" id="GO:0005634">
    <property type="term" value="C:nucleus"/>
    <property type="evidence" value="ECO:0007669"/>
    <property type="project" value="UniProtKB-SubCell"/>
</dbReference>
<dbReference type="GO" id="GO:0052905">
    <property type="term" value="F:tRNA (guanosine(9)-N1)-methyltransferase activity"/>
    <property type="evidence" value="ECO:0007669"/>
    <property type="project" value="UniProtKB-EC"/>
</dbReference>
<dbReference type="GO" id="GO:0000049">
    <property type="term" value="F:tRNA binding"/>
    <property type="evidence" value="ECO:0007669"/>
    <property type="project" value="TreeGrafter"/>
</dbReference>
<dbReference type="GO" id="GO:0002939">
    <property type="term" value="P:tRNA N1-guanine methylation"/>
    <property type="evidence" value="ECO:0007669"/>
    <property type="project" value="TreeGrafter"/>
</dbReference>
<dbReference type="CDD" id="cd18089">
    <property type="entry name" value="SPOUT_Trm10-like"/>
    <property type="match status" value="1"/>
</dbReference>
<dbReference type="Gene3D" id="3.40.1280.30">
    <property type="match status" value="1"/>
</dbReference>
<dbReference type="InterPro" id="IPR028564">
    <property type="entry name" value="MT_TRM10-typ"/>
</dbReference>
<dbReference type="InterPro" id="IPR038459">
    <property type="entry name" value="MT_TRM10-typ_sf"/>
</dbReference>
<dbReference type="InterPro" id="IPR016653">
    <property type="entry name" value="TRM10/TRM10A"/>
</dbReference>
<dbReference type="InterPro" id="IPR007356">
    <property type="entry name" value="tRNA_m1G_MeTrfase_euk"/>
</dbReference>
<dbReference type="InterPro" id="IPR016009">
    <property type="entry name" value="tRNA_MeTrfase_TRMD/TRM10"/>
</dbReference>
<dbReference type="PANTHER" id="PTHR13563">
    <property type="entry name" value="TRNA (GUANINE-9-) METHYLTRANSFERASE"/>
    <property type="match status" value="1"/>
</dbReference>
<dbReference type="PANTHER" id="PTHR13563:SF13">
    <property type="entry name" value="TRNA METHYLTRANSFERASE 10 HOMOLOG A"/>
    <property type="match status" value="1"/>
</dbReference>
<dbReference type="Pfam" id="PF01746">
    <property type="entry name" value="tRNA_m1G_MT"/>
    <property type="match status" value="1"/>
</dbReference>
<dbReference type="PIRSF" id="PIRSF016323">
    <property type="entry name" value="tRNA_m1G_mtfrase_met"/>
    <property type="match status" value="1"/>
</dbReference>
<dbReference type="PROSITE" id="PS51675">
    <property type="entry name" value="SAM_MT_TRM10"/>
    <property type="match status" value="1"/>
</dbReference>
<comment type="function">
    <text evidence="2">S-adenosyl-L-methionine-dependent guanine N(1)-methyltransferase that catalyzes the formation of N(1)-methylguanine at position 9 (m1G9) in cytoplasmic tRNA.</text>
</comment>
<comment type="catalytic activity">
    <reaction evidence="2">
        <text>guanosine(9) in tRNA + S-adenosyl-L-methionine = N(1)-methylguanosine(9) in tRNA + S-adenosyl-L-homocysteine + H(+)</text>
        <dbReference type="Rhea" id="RHEA:43156"/>
        <dbReference type="Rhea" id="RHEA-COMP:10367"/>
        <dbReference type="Rhea" id="RHEA-COMP:10368"/>
        <dbReference type="ChEBI" id="CHEBI:15378"/>
        <dbReference type="ChEBI" id="CHEBI:57856"/>
        <dbReference type="ChEBI" id="CHEBI:59789"/>
        <dbReference type="ChEBI" id="CHEBI:73542"/>
        <dbReference type="ChEBI" id="CHEBI:74269"/>
        <dbReference type="EC" id="2.1.1.221"/>
    </reaction>
</comment>
<comment type="subunit">
    <text evidence="1">Monomer.</text>
</comment>
<comment type="subcellular location">
    <subcellularLocation>
        <location evidence="2">Cytoplasm</location>
    </subcellularLocation>
    <subcellularLocation>
        <location evidence="2">Nucleus</location>
    </subcellularLocation>
</comment>
<comment type="similarity">
    <text evidence="3">Belongs to the class IV-like SAM-binding methyltransferase superfamily. TRM10 family.</text>
</comment>
<comment type="sequence caution" evidence="5">
    <conflict type="erroneous initiation">
        <sequence resource="EMBL-CDS" id="CAG85460"/>
    </conflict>
</comment>
<evidence type="ECO:0000250" key="1">
    <source>
        <dbReference type="UniProtKB" id="O14214"/>
    </source>
</evidence>
<evidence type="ECO:0000250" key="2">
    <source>
        <dbReference type="UniProtKB" id="Q12400"/>
    </source>
</evidence>
<evidence type="ECO:0000255" key="3">
    <source>
        <dbReference type="PROSITE-ProRule" id="PRU01012"/>
    </source>
</evidence>
<evidence type="ECO:0000256" key="4">
    <source>
        <dbReference type="SAM" id="MobiDB-lite"/>
    </source>
</evidence>
<evidence type="ECO:0000305" key="5"/>
<feature type="chain" id="PRO_0000060514" description="tRNA (guanine(9)-N1)-methyltransferase">
    <location>
        <begin position="1"/>
        <end position="360"/>
    </location>
</feature>
<feature type="domain" description="SAM-dependent MTase TRM10-type" evidence="3">
    <location>
        <begin position="94"/>
        <end position="293"/>
    </location>
</feature>
<feature type="region of interest" description="Disordered" evidence="4">
    <location>
        <begin position="1"/>
        <end position="77"/>
    </location>
</feature>
<feature type="region of interest" description="Disordered" evidence="4">
    <location>
        <begin position="291"/>
        <end position="360"/>
    </location>
</feature>
<feature type="compositionally biased region" description="Basic and acidic residues" evidence="4">
    <location>
        <begin position="8"/>
        <end position="24"/>
    </location>
</feature>
<feature type="compositionally biased region" description="Basic and acidic residues" evidence="4">
    <location>
        <begin position="33"/>
        <end position="55"/>
    </location>
</feature>
<feature type="compositionally biased region" description="Basic residues" evidence="4">
    <location>
        <begin position="56"/>
        <end position="67"/>
    </location>
</feature>
<feature type="compositionally biased region" description="Basic and acidic residues" evidence="4">
    <location>
        <begin position="68"/>
        <end position="77"/>
    </location>
</feature>
<feature type="compositionally biased region" description="Basic and acidic residues" evidence="4">
    <location>
        <begin position="297"/>
        <end position="306"/>
    </location>
</feature>
<feature type="compositionally biased region" description="Low complexity" evidence="4">
    <location>
        <begin position="307"/>
        <end position="324"/>
    </location>
</feature>
<feature type="compositionally biased region" description="Polar residues" evidence="4">
    <location>
        <begin position="328"/>
        <end position="343"/>
    </location>
</feature>
<feature type="active site" description="Proton acceptor" evidence="1">
    <location>
        <position position="223"/>
    </location>
</feature>
<feature type="binding site" evidence="2">
    <location>
        <begin position="199"/>
        <end position="200"/>
    </location>
    <ligand>
        <name>S-adenosyl-L-methionine</name>
        <dbReference type="ChEBI" id="CHEBI:59789"/>
    </ligand>
</feature>
<feature type="binding site" evidence="2">
    <location>
        <position position="219"/>
    </location>
    <ligand>
        <name>S-adenosyl-L-methionine</name>
        <dbReference type="ChEBI" id="CHEBI:59789"/>
    </ligand>
</feature>
<feature type="binding site" evidence="2">
    <location>
        <begin position="223"/>
        <end position="227"/>
    </location>
    <ligand>
        <name>S-adenosyl-L-methionine</name>
        <dbReference type="ChEBI" id="CHEBI:59789"/>
    </ligand>
</feature>
<feature type="binding site" evidence="2">
    <location>
        <position position="231"/>
    </location>
    <ligand>
        <name>S-adenosyl-L-methionine</name>
        <dbReference type="ChEBI" id="CHEBI:59789"/>
    </ligand>
</feature>
<feature type="binding site" evidence="2">
    <location>
        <position position="245"/>
    </location>
    <ligand>
        <name>S-adenosyl-L-methionine</name>
        <dbReference type="ChEBI" id="CHEBI:59789"/>
    </ligand>
</feature>
<feature type="binding site" evidence="2">
    <location>
        <begin position="257"/>
        <end position="259"/>
    </location>
    <ligand>
        <name>S-adenosyl-L-methionine</name>
        <dbReference type="ChEBI" id="CHEBI:59789"/>
    </ligand>
</feature>
<keyword id="KW-0963">Cytoplasm</keyword>
<keyword id="KW-0489">Methyltransferase</keyword>
<keyword id="KW-0539">Nucleus</keyword>
<keyword id="KW-1185">Reference proteome</keyword>
<keyword id="KW-0949">S-adenosyl-L-methionine</keyword>
<keyword id="KW-0808">Transferase</keyword>
<keyword id="KW-0819">tRNA processing</keyword>
<reference key="1">
    <citation type="journal article" date="2004" name="Nature">
        <title>Genome evolution in yeasts.</title>
        <authorList>
            <person name="Dujon B."/>
            <person name="Sherman D."/>
            <person name="Fischer G."/>
            <person name="Durrens P."/>
            <person name="Casaregola S."/>
            <person name="Lafontaine I."/>
            <person name="de Montigny J."/>
            <person name="Marck C."/>
            <person name="Neuveglise C."/>
            <person name="Talla E."/>
            <person name="Goffard N."/>
            <person name="Frangeul L."/>
            <person name="Aigle M."/>
            <person name="Anthouard V."/>
            <person name="Babour A."/>
            <person name="Barbe V."/>
            <person name="Barnay S."/>
            <person name="Blanchin S."/>
            <person name="Beckerich J.-M."/>
            <person name="Beyne E."/>
            <person name="Bleykasten C."/>
            <person name="Boisrame A."/>
            <person name="Boyer J."/>
            <person name="Cattolico L."/>
            <person name="Confanioleri F."/>
            <person name="de Daruvar A."/>
            <person name="Despons L."/>
            <person name="Fabre E."/>
            <person name="Fairhead C."/>
            <person name="Ferry-Dumazet H."/>
            <person name="Groppi A."/>
            <person name="Hantraye F."/>
            <person name="Hennequin C."/>
            <person name="Jauniaux N."/>
            <person name="Joyet P."/>
            <person name="Kachouri R."/>
            <person name="Kerrest A."/>
            <person name="Koszul R."/>
            <person name="Lemaire M."/>
            <person name="Lesur I."/>
            <person name="Ma L."/>
            <person name="Muller H."/>
            <person name="Nicaud J.-M."/>
            <person name="Nikolski M."/>
            <person name="Oztas S."/>
            <person name="Ozier-Kalogeropoulos O."/>
            <person name="Pellenz S."/>
            <person name="Potier S."/>
            <person name="Richard G.-F."/>
            <person name="Straub M.-L."/>
            <person name="Suleau A."/>
            <person name="Swennen D."/>
            <person name="Tekaia F."/>
            <person name="Wesolowski-Louvel M."/>
            <person name="Westhof E."/>
            <person name="Wirth B."/>
            <person name="Zeniou-Meyer M."/>
            <person name="Zivanovic Y."/>
            <person name="Bolotin-Fukuhara M."/>
            <person name="Thierry A."/>
            <person name="Bouchier C."/>
            <person name="Caudron B."/>
            <person name="Scarpelli C."/>
            <person name="Gaillardin C."/>
            <person name="Weissenbach J."/>
            <person name="Wincker P."/>
            <person name="Souciet J.-L."/>
        </authorList>
    </citation>
    <scope>NUCLEOTIDE SEQUENCE [LARGE SCALE GENOMIC DNA]</scope>
    <source>
        <strain>ATCC 36239 / CBS 767 / BCRC 21394 / JCM 1990 / NBRC 0083 / IGC 2968</strain>
    </source>
</reference>
<organism>
    <name type="scientific">Debaryomyces hansenii (strain ATCC 36239 / CBS 767 / BCRC 21394 / JCM 1990 / NBRC 0083 / IGC 2968)</name>
    <name type="common">Yeast</name>
    <name type="synonym">Torulaspora hansenii</name>
    <dbReference type="NCBI Taxonomy" id="284592"/>
    <lineage>
        <taxon>Eukaryota</taxon>
        <taxon>Fungi</taxon>
        <taxon>Dikarya</taxon>
        <taxon>Ascomycota</taxon>
        <taxon>Saccharomycotina</taxon>
        <taxon>Pichiomycetes</taxon>
        <taxon>Debaryomycetaceae</taxon>
        <taxon>Debaryomyces</taxon>
    </lineage>
</organism>
<proteinExistence type="inferred from homology"/>
<name>TRM10_DEBHA</name>
<accession>Q6BWG3</accession>
<protein>
    <recommendedName>
        <fullName evidence="2">tRNA (guanine(9)-N1)-methyltransferase</fullName>
        <ecNumber evidence="2">2.1.1.221</ecNumber>
    </recommendedName>
    <alternativeName>
        <fullName evidence="2">tRNA methyltransferase 10</fullName>
    </alternativeName>
    <alternativeName>
        <fullName evidence="2">tRNA(m1G9)-methyltransferase</fullName>
        <shortName evidence="2">tRNA(m1G9)MTase</shortName>
    </alternativeName>
</protein>